<organism>
    <name type="scientific">Homo sapiens</name>
    <name type="common">Human</name>
    <dbReference type="NCBI Taxonomy" id="9606"/>
    <lineage>
        <taxon>Eukaryota</taxon>
        <taxon>Metazoa</taxon>
        <taxon>Chordata</taxon>
        <taxon>Craniata</taxon>
        <taxon>Vertebrata</taxon>
        <taxon>Euteleostomi</taxon>
        <taxon>Mammalia</taxon>
        <taxon>Eutheria</taxon>
        <taxon>Euarchontoglires</taxon>
        <taxon>Primates</taxon>
        <taxon>Haplorrhini</taxon>
        <taxon>Catarrhini</taxon>
        <taxon>Hominidae</taxon>
        <taxon>Homo</taxon>
    </lineage>
</organism>
<gene>
    <name type="primary">OR2A12</name>
    <name type="synonym">OR2A12P</name>
</gene>
<name>O2A12_HUMAN</name>
<proteinExistence type="evidence at transcript level"/>
<accession>Q8NGT7</accession>
<accession>A4D2G4</accession>
<accession>Q6IF43</accession>
<feature type="chain" id="PRO_0000150457" description="Olfactory receptor 2A12">
    <location>
        <begin position="1"/>
        <end position="310"/>
    </location>
</feature>
<feature type="topological domain" description="Extracellular" evidence="1">
    <location>
        <begin position="1"/>
        <end position="24"/>
    </location>
</feature>
<feature type="transmembrane region" description="Helical; Name=1" evidence="1">
    <location>
        <begin position="25"/>
        <end position="48"/>
    </location>
</feature>
<feature type="topological domain" description="Cytoplasmic" evidence="1">
    <location>
        <begin position="49"/>
        <end position="56"/>
    </location>
</feature>
<feature type="transmembrane region" description="Helical; Name=2" evidence="1">
    <location>
        <begin position="57"/>
        <end position="78"/>
    </location>
</feature>
<feature type="topological domain" description="Extracellular" evidence="1">
    <location>
        <begin position="79"/>
        <end position="99"/>
    </location>
</feature>
<feature type="transmembrane region" description="Helical; Name=3" evidence="1">
    <location>
        <begin position="100"/>
        <end position="119"/>
    </location>
</feature>
<feature type="topological domain" description="Cytoplasmic" evidence="1">
    <location>
        <begin position="120"/>
        <end position="138"/>
    </location>
</feature>
<feature type="transmembrane region" description="Helical; Name=4" evidence="1">
    <location>
        <begin position="139"/>
        <end position="157"/>
    </location>
</feature>
<feature type="topological domain" description="Extracellular" evidence="1">
    <location>
        <begin position="158"/>
        <end position="194"/>
    </location>
</feature>
<feature type="transmembrane region" description="Helical; Name=5" evidence="1">
    <location>
        <begin position="195"/>
        <end position="218"/>
    </location>
</feature>
<feature type="topological domain" description="Cytoplasmic" evidence="1">
    <location>
        <begin position="219"/>
        <end position="235"/>
    </location>
</feature>
<feature type="transmembrane region" description="Helical; Name=6" evidence="1">
    <location>
        <begin position="236"/>
        <end position="258"/>
    </location>
</feature>
<feature type="topological domain" description="Extracellular" evidence="1">
    <location>
        <begin position="259"/>
        <end position="271"/>
    </location>
</feature>
<feature type="transmembrane region" description="Helical; Name=7" evidence="1">
    <location>
        <begin position="272"/>
        <end position="291"/>
    </location>
</feature>
<feature type="topological domain" description="Cytoplasmic" evidence="1">
    <location>
        <begin position="292"/>
        <end position="310"/>
    </location>
</feature>
<feature type="glycosylation site" description="N-linked (GlcNAc...) asparagine" evidence="1">
    <location>
        <position position="4"/>
    </location>
</feature>
<feature type="disulfide bond" evidence="2">
    <location>
        <begin position="96"/>
        <end position="188"/>
    </location>
</feature>
<feature type="sequence variant" id="VAR_034171" description="In dbSNP:rs9655672.">
    <original>A</original>
    <variation>T</variation>
    <location>
        <position position="223"/>
    </location>
</feature>
<dbReference type="EMBL" id="AB065694">
    <property type="protein sequence ID" value="BAC05917.1"/>
    <property type="molecule type" value="Genomic_DNA"/>
</dbReference>
<dbReference type="EMBL" id="KP290177">
    <property type="protein sequence ID" value="ALI87363.1"/>
    <property type="molecule type" value="Genomic_DNA"/>
</dbReference>
<dbReference type="EMBL" id="CH236959">
    <property type="protein sequence ID" value="EAL23798.1"/>
    <property type="molecule type" value="Genomic_DNA"/>
</dbReference>
<dbReference type="EMBL" id="CH878732">
    <property type="protein sequence ID" value="EAW55631.1"/>
    <property type="molecule type" value="Genomic_DNA"/>
</dbReference>
<dbReference type="EMBL" id="BC136902">
    <property type="protein sequence ID" value="AAI36903.1"/>
    <property type="molecule type" value="mRNA"/>
</dbReference>
<dbReference type="EMBL" id="BC136903">
    <property type="protein sequence ID" value="AAI36904.1"/>
    <property type="molecule type" value="mRNA"/>
</dbReference>
<dbReference type="EMBL" id="BK004419">
    <property type="protein sequence ID" value="DAA04817.1"/>
    <property type="molecule type" value="Genomic_DNA"/>
</dbReference>
<dbReference type="CCDS" id="CCDS43670.1"/>
<dbReference type="RefSeq" id="NP_001004135.1">
    <property type="nucleotide sequence ID" value="NM_001004135.2"/>
</dbReference>
<dbReference type="SMR" id="Q8NGT7"/>
<dbReference type="BioGRID" id="131386">
    <property type="interactions" value="3"/>
</dbReference>
<dbReference type="FunCoup" id="Q8NGT7">
    <property type="interactions" value="470"/>
</dbReference>
<dbReference type="STRING" id="9606.ENSP00000493157"/>
<dbReference type="GlyCosmos" id="Q8NGT7">
    <property type="glycosylation" value="1 site, No reported glycans"/>
</dbReference>
<dbReference type="GlyGen" id="Q8NGT7">
    <property type="glycosylation" value="1 site"/>
</dbReference>
<dbReference type="iPTMnet" id="Q8NGT7"/>
<dbReference type="PhosphoSitePlus" id="Q8NGT7"/>
<dbReference type="BioMuta" id="OR2A12"/>
<dbReference type="DMDM" id="38372499"/>
<dbReference type="MassIVE" id="Q8NGT7"/>
<dbReference type="PaxDb" id="9606-ENSP00000386174"/>
<dbReference type="ProteomicsDB" id="73601"/>
<dbReference type="Antibodypedia" id="67812">
    <property type="antibodies" value="73 antibodies from 18 providers"/>
</dbReference>
<dbReference type="DNASU" id="346525"/>
<dbReference type="Ensembl" id="ENST00000408949.2">
    <property type="protein sequence ID" value="ENSP00000386174.2"/>
    <property type="gene ID" value="ENSG00000221858.3"/>
</dbReference>
<dbReference type="Ensembl" id="ENST00000641592.1">
    <property type="protein sequence ID" value="ENSP00000493157.1"/>
    <property type="gene ID" value="ENSG00000221858.3"/>
</dbReference>
<dbReference type="Ensembl" id="ENST00000645792.2">
    <property type="protein sequence ID" value="ENSP00000500844.1"/>
    <property type="gene ID" value="ENSG00000284949.2"/>
</dbReference>
<dbReference type="Ensembl" id="ENST00000671935.1">
    <property type="protein sequence ID" value="ENSP00000500924.1"/>
    <property type="gene ID" value="ENSG00000284949.2"/>
</dbReference>
<dbReference type="GeneID" id="346525"/>
<dbReference type="KEGG" id="hsa:346525"/>
<dbReference type="MANE-Select" id="ENST00000641592.1">
    <property type="protein sequence ID" value="ENSP00000493157.1"/>
    <property type="RefSeq nucleotide sequence ID" value="NM_001004135.2"/>
    <property type="RefSeq protein sequence ID" value="NP_001004135.1"/>
</dbReference>
<dbReference type="UCSC" id="uc011kty.3">
    <property type="organism name" value="human"/>
</dbReference>
<dbReference type="AGR" id="HGNC:15082"/>
<dbReference type="CTD" id="346525"/>
<dbReference type="GeneCards" id="OR2A12"/>
<dbReference type="HGNC" id="HGNC:15082">
    <property type="gene designation" value="OR2A12"/>
</dbReference>
<dbReference type="HPA" id="ENSG00000221858">
    <property type="expression patterns" value="Not detected"/>
</dbReference>
<dbReference type="neXtProt" id="NX_Q8NGT7"/>
<dbReference type="PharmGKB" id="PA32104"/>
<dbReference type="VEuPathDB" id="HostDB:ENSG00000221858"/>
<dbReference type="eggNOG" id="ENOG502SIA2">
    <property type="taxonomic scope" value="Eukaryota"/>
</dbReference>
<dbReference type="GeneTree" id="ENSGT00940000153255"/>
<dbReference type="HOGENOM" id="CLU_012526_1_2_1"/>
<dbReference type="InParanoid" id="Q8NGT7"/>
<dbReference type="OMA" id="ATCWIFS"/>
<dbReference type="OrthoDB" id="6147321at2759"/>
<dbReference type="PAN-GO" id="Q8NGT7">
    <property type="GO annotations" value="0 GO annotations based on evolutionary models"/>
</dbReference>
<dbReference type="PhylomeDB" id="Q8NGT7"/>
<dbReference type="TreeFam" id="TF337251"/>
<dbReference type="PathwayCommons" id="Q8NGT7"/>
<dbReference type="Reactome" id="R-HSA-9752946">
    <property type="pathway name" value="Expression and translocation of olfactory receptors"/>
</dbReference>
<dbReference type="BioGRID-ORCS" id="346525">
    <property type="hits" value="9 hits in 746 CRISPR screens"/>
</dbReference>
<dbReference type="ChiTaRS" id="OR2A12">
    <property type="organism name" value="human"/>
</dbReference>
<dbReference type="GeneWiki" id="OR2A12"/>
<dbReference type="GenomeRNAi" id="346525"/>
<dbReference type="Pharos" id="Q8NGT7">
    <property type="development level" value="Tdark"/>
</dbReference>
<dbReference type="PRO" id="PR:Q8NGT7"/>
<dbReference type="Proteomes" id="UP000005640">
    <property type="component" value="Chromosome 7"/>
</dbReference>
<dbReference type="RNAct" id="Q8NGT7">
    <property type="molecule type" value="protein"/>
</dbReference>
<dbReference type="Bgee" id="ENSG00000221858">
    <property type="expression patterns" value="Expressed in male germ line stem cell (sensu Vertebrata) in testis"/>
</dbReference>
<dbReference type="GO" id="GO:0005886">
    <property type="term" value="C:plasma membrane"/>
    <property type="evidence" value="ECO:0000318"/>
    <property type="project" value="GO_Central"/>
</dbReference>
<dbReference type="GO" id="GO:0004930">
    <property type="term" value="F:G protein-coupled receptor activity"/>
    <property type="evidence" value="ECO:0007669"/>
    <property type="project" value="UniProtKB-KW"/>
</dbReference>
<dbReference type="GO" id="GO:0004984">
    <property type="term" value="F:olfactory receptor activity"/>
    <property type="evidence" value="ECO:0000318"/>
    <property type="project" value="GO_Central"/>
</dbReference>
<dbReference type="GO" id="GO:0050911">
    <property type="term" value="P:detection of chemical stimulus involved in sensory perception of smell"/>
    <property type="evidence" value="ECO:0000318"/>
    <property type="project" value="GO_Central"/>
</dbReference>
<dbReference type="CDD" id="cd15420">
    <property type="entry name" value="7tmA_OR2A-like"/>
    <property type="match status" value="1"/>
</dbReference>
<dbReference type="FunFam" id="1.10.1220.70:FF:000001">
    <property type="entry name" value="Olfactory receptor"/>
    <property type="match status" value="1"/>
</dbReference>
<dbReference type="FunFam" id="1.20.1070.10:FF:000008">
    <property type="entry name" value="Olfactory receptor"/>
    <property type="match status" value="1"/>
</dbReference>
<dbReference type="Gene3D" id="1.20.1070.10">
    <property type="entry name" value="Rhodopsin 7-helix transmembrane proteins"/>
    <property type="match status" value="1"/>
</dbReference>
<dbReference type="InterPro" id="IPR000276">
    <property type="entry name" value="GPCR_Rhodpsn"/>
</dbReference>
<dbReference type="InterPro" id="IPR017452">
    <property type="entry name" value="GPCR_Rhodpsn_7TM"/>
</dbReference>
<dbReference type="InterPro" id="IPR000725">
    <property type="entry name" value="Olfact_rcpt"/>
</dbReference>
<dbReference type="PANTHER" id="PTHR26453">
    <property type="entry name" value="OLFACTORY RECEPTOR"/>
    <property type="match status" value="1"/>
</dbReference>
<dbReference type="Pfam" id="PF13853">
    <property type="entry name" value="7tm_4"/>
    <property type="match status" value="1"/>
</dbReference>
<dbReference type="PRINTS" id="PR00237">
    <property type="entry name" value="GPCRRHODOPSN"/>
</dbReference>
<dbReference type="PRINTS" id="PR00245">
    <property type="entry name" value="OLFACTORYR"/>
</dbReference>
<dbReference type="SUPFAM" id="SSF81321">
    <property type="entry name" value="Family A G protein-coupled receptor-like"/>
    <property type="match status" value="1"/>
</dbReference>
<dbReference type="PROSITE" id="PS00237">
    <property type="entry name" value="G_PROTEIN_RECEP_F1_1"/>
    <property type="match status" value="1"/>
</dbReference>
<dbReference type="PROSITE" id="PS50262">
    <property type="entry name" value="G_PROTEIN_RECEP_F1_2"/>
    <property type="match status" value="1"/>
</dbReference>
<protein>
    <recommendedName>
        <fullName>Olfactory receptor 2A12</fullName>
    </recommendedName>
    <alternativeName>
        <fullName>Olfactory receptor OR7-10</fullName>
    </alternativeName>
</protein>
<sequence length="310" mass="35213">MESNQTWITEVILLGFQVDPALELFLFGFFLLFYSLTLMGNGIILGLIYLDSRLHTPMYVFLSHLAIVDMSYASSTVPKMLANLVMHKKVISFAPCILQTFLYLAFAITECLILVMMCYDRYVAICHPLQYTLIMNWRVCTVLASTCWIFSFLLALVHITLILRLPFCGPQKINHFFCQIMSVFKLACADTRLNQVVLFAGSAFILVGPLCLVLVSYLHILVAILRIQSGEGRRKAFSTCSSHLCVVGLFFGSAIVMYMAPKSSHSQERRKILSLFYSLFNPILNPLIYSLRNAEVKGALKRVLWKQRSM</sequence>
<keyword id="KW-1003">Cell membrane</keyword>
<keyword id="KW-1015">Disulfide bond</keyword>
<keyword id="KW-0297">G-protein coupled receptor</keyword>
<keyword id="KW-0325">Glycoprotein</keyword>
<keyword id="KW-0472">Membrane</keyword>
<keyword id="KW-0552">Olfaction</keyword>
<keyword id="KW-0675">Receptor</keyword>
<keyword id="KW-1185">Reference proteome</keyword>
<keyword id="KW-0716">Sensory transduction</keyword>
<keyword id="KW-0807">Transducer</keyword>
<keyword id="KW-0812">Transmembrane</keyword>
<keyword id="KW-1133">Transmembrane helix</keyword>
<evidence type="ECO:0000255" key="1"/>
<evidence type="ECO:0000255" key="2">
    <source>
        <dbReference type="PROSITE-ProRule" id="PRU00521"/>
    </source>
</evidence>
<evidence type="ECO:0000305" key="3"/>
<comment type="function">
    <text evidence="3">Odorant receptor.</text>
</comment>
<comment type="subcellular location">
    <subcellularLocation>
        <location>Cell membrane</location>
        <topology>Multi-pass membrane protein</topology>
    </subcellularLocation>
</comment>
<comment type="similarity">
    <text evidence="2">Belongs to the G-protein coupled receptor 1 family.</text>
</comment>
<comment type="online information" name="Human Olfactory Receptor Data Exploratorium (HORDE)">
    <link uri="http://genome.weizmann.ac.il/horde/card/index/symbol:OR2A12"/>
</comment>
<reference key="1">
    <citation type="submission" date="2001-07" db="EMBL/GenBank/DDBJ databases">
        <title>Genome-wide discovery and analysis of human seven transmembrane helix receptor genes.</title>
        <authorList>
            <person name="Suwa M."/>
            <person name="Sato T."/>
            <person name="Okouchi I."/>
            <person name="Arita M."/>
            <person name="Futami K."/>
            <person name="Matsumoto S."/>
            <person name="Tsutsumi S."/>
            <person name="Aburatani H."/>
            <person name="Asai K."/>
            <person name="Akiyama Y."/>
        </authorList>
    </citation>
    <scope>NUCLEOTIDE SEQUENCE [GENOMIC DNA]</scope>
</reference>
<reference key="2">
    <citation type="journal article" date="2015" name="Sci. Data">
        <title>Human olfactory receptor responses to odorants.</title>
        <authorList>
            <person name="Mainland J.D."/>
            <person name="Li Y.R."/>
            <person name="Zhou T."/>
            <person name="Liu W.L."/>
            <person name="Matsunami H."/>
        </authorList>
    </citation>
    <scope>NUCLEOTIDE SEQUENCE [GENOMIC DNA]</scope>
</reference>
<reference key="3">
    <citation type="submission" date="2005-09" db="EMBL/GenBank/DDBJ databases">
        <authorList>
            <person name="Mural R.J."/>
            <person name="Istrail S."/>
            <person name="Sutton G.G."/>
            <person name="Florea L."/>
            <person name="Halpern A.L."/>
            <person name="Mobarry C.M."/>
            <person name="Lippert R."/>
            <person name="Walenz B."/>
            <person name="Shatkay H."/>
            <person name="Dew I."/>
            <person name="Miller J.R."/>
            <person name="Flanigan M.J."/>
            <person name="Edwards N.J."/>
            <person name="Bolanos R."/>
            <person name="Fasulo D."/>
            <person name="Halldorsson B.V."/>
            <person name="Hannenhalli S."/>
            <person name="Turner R."/>
            <person name="Yooseph S."/>
            <person name="Lu F."/>
            <person name="Nusskern D.R."/>
            <person name="Shue B.C."/>
            <person name="Zheng X.H."/>
            <person name="Zhong F."/>
            <person name="Delcher A.L."/>
            <person name="Huson D.H."/>
            <person name="Kravitz S.A."/>
            <person name="Mouchard L."/>
            <person name="Reinert K."/>
            <person name="Remington K.A."/>
            <person name="Clark A.G."/>
            <person name="Waterman M.S."/>
            <person name="Eichler E.E."/>
            <person name="Adams M.D."/>
            <person name="Hunkapiller M.W."/>
            <person name="Myers E.W."/>
            <person name="Venter J.C."/>
        </authorList>
    </citation>
    <scope>NUCLEOTIDE SEQUENCE [LARGE SCALE GENOMIC DNA]</scope>
</reference>
<reference key="4">
    <citation type="journal article" date="2003" name="Science">
        <title>Human chromosome 7: DNA sequence and biology.</title>
        <authorList>
            <person name="Scherer S.W."/>
            <person name="Cheung J."/>
            <person name="MacDonald J.R."/>
            <person name="Osborne L.R."/>
            <person name="Nakabayashi K."/>
            <person name="Herbrick J.-A."/>
            <person name="Carson A.R."/>
            <person name="Parker-Katiraee L."/>
            <person name="Skaug J."/>
            <person name="Khaja R."/>
            <person name="Zhang J."/>
            <person name="Hudek A.K."/>
            <person name="Li M."/>
            <person name="Haddad M."/>
            <person name="Duggan G.E."/>
            <person name="Fernandez B.A."/>
            <person name="Kanematsu E."/>
            <person name="Gentles S."/>
            <person name="Christopoulos C.C."/>
            <person name="Choufani S."/>
            <person name="Kwasnicka D."/>
            <person name="Zheng X.H."/>
            <person name="Lai Z."/>
            <person name="Nusskern D.R."/>
            <person name="Zhang Q."/>
            <person name="Gu Z."/>
            <person name="Lu F."/>
            <person name="Zeesman S."/>
            <person name="Nowaczyk M.J."/>
            <person name="Teshima I."/>
            <person name="Chitayat D."/>
            <person name="Shuman C."/>
            <person name="Weksberg R."/>
            <person name="Zackai E.H."/>
            <person name="Grebe T.A."/>
            <person name="Cox S.R."/>
            <person name="Kirkpatrick S.J."/>
            <person name="Rahman N."/>
            <person name="Friedman J.M."/>
            <person name="Heng H.H.Q."/>
            <person name="Pelicci P.G."/>
            <person name="Lo-Coco F."/>
            <person name="Belloni E."/>
            <person name="Shaffer L.G."/>
            <person name="Pober B."/>
            <person name="Morton C.C."/>
            <person name="Gusella J.F."/>
            <person name="Bruns G.A.P."/>
            <person name="Korf B.R."/>
            <person name="Quade B.J."/>
            <person name="Ligon A.H."/>
            <person name="Ferguson H."/>
            <person name="Higgins A.W."/>
            <person name="Leach N.T."/>
            <person name="Herrick S.R."/>
            <person name="Lemyre E."/>
            <person name="Farra C.G."/>
            <person name="Kim H.-G."/>
            <person name="Summers A.M."/>
            <person name="Gripp K.W."/>
            <person name="Roberts W."/>
            <person name="Szatmari P."/>
            <person name="Winsor E.J.T."/>
            <person name="Grzeschik K.-H."/>
            <person name="Teebi A."/>
            <person name="Minassian B.A."/>
            <person name="Kere J."/>
            <person name="Armengol L."/>
            <person name="Pujana M.A."/>
            <person name="Estivill X."/>
            <person name="Wilson M.D."/>
            <person name="Koop B.F."/>
            <person name="Tosi S."/>
            <person name="Moore G.E."/>
            <person name="Boright A.P."/>
            <person name="Zlotorynski E."/>
            <person name="Kerem B."/>
            <person name="Kroisel P.M."/>
            <person name="Petek E."/>
            <person name="Oscier D.G."/>
            <person name="Mould S.J."/>
            <person name="Doehner H."/>
            <person name="Doehner K."/>
            <person name="Rommens J.M."/>
            <person name="Vincent J.B."/>
            <person name="Venter J.C."/>
            <person name="Li P.W."/>
            <person name="Mural R.J."/>
            <person name="Adams M.D."/>
            <person name="Tsui L.-C."/>
        </authorList>
    </citation>
    <scope>NUCLEOTIDE SEQUENCE [LARGE SCALE GENOMIC DNA]</scope>
</reference>
<reference key="5">
    <citation type="journal article" date="2004" name="Genome Res.">
        <title>The status, quality, and expansion of the NIH full-length cDNA project: the Mammalian Gene Collection (MGC).</title>
        <authorList>
            <consortium name="The MGC Project Team"/>
        </authorList>
    </citation>
    <scope>NUCLEOTIDE SEQUENCE [LARGE SCALE MRNA]</scope>
    <source>
        <tissue>Testis</tissue>
    </source>
</reference>
<reference key="6">
    <citation type="journal article" date="2004" name="Proc. Natl. Acad. Sci. U.S.A.">
        <title>The human olfactory receptor gene family.</title>
        <authorList>
            <person name="Malnic B."/>
            <person name="Godfrey P.A."/>
            <person name="Buck L.B."/>
        </authorList>
    </citation>
    <scope>IDENTIFICATION</scope>
</reference>
<reference key="7">
    <citation type="journal article" date="2004" name="Proc. Natl. Acad. Sci. U.S.A.">
        <authorList>
            <person name="Malnic B."/>
            <person name="Godfrey P.A."/>
            <person name="Buck L.B."/>
        </authorList>
    </citation>
    <scope>ERRATUM OF PUBMED:14983052</scope>
</reference>